<feature type="chain" id="PRO_0000330756" description="DNA-directed RNA polymerase III subunit rpc3">
    <location>
        <begin position="1"/>
        <end position="666"/>
    </location>
</feature>
<feature type="region of interest" description="Disordered" evidence="2">
    <location>
        <begin position="179"/>
        <end position="228"/>
    </location>
</feature>
<feature type="region of interest" description="Disordered" evidence="2">
    <location>
        <begin position="250"/>
        <end position="307"/>
    </location>
</feature>
<feature type="region of interest" description="Disordered" evidence="2">
    <location>
        <begin position="320"/>
        <end position="371"/>
    </location>
</feature>
<feature type="compositionally biased region" description="Polar residues" evidence="2">
    <location>
        <begin position="253"/>
        <end position="262"/>
    </location>
</feature>
<feature type="compositionally biased region" description="Polar residues" evidence="2">
    <location>
        <begin position="321"/>
        <end position="330"/>
    </location>
</feature>
<feature type="compositionally biased region" description="Low complexity" evidence="2">
    <location>
        <begin position="331"/>
        <end position="341"/>
    </location>
</feature>
<feature type="compositionally biased region" description="Low complexity" evidence="2">
    <location>
        <begin position="353"/>
        <end position="366"/>
    </location>
</feature>
<dbReference type="EMBL" id="AAFI02000003">
    <property type="protein sequence ID" value="EAL73493.1"/>
    <property type="molecule type" value="Genomic_DNA"/>
</dbReference>
<dbReference type="RefSeq" id="XP_647538.1">
    <property type="nucleotide sequence ID" value="XM_642446.1"/>
</dbReference>
<dbReference type="SMR" id="Q55FJ5"/>
<dbReference type="FunCoup" id="Q55FJ5">
    <property type="interactions" value="386"/>
</dbReference>
<dbReference type="STRING" id="44689.Q55FJ5"/>
<dbReference type="PaxDb" id="44689-DDB0216314"/>
<dbReference type="EnsemblProtists" id="EAL73493">
    <property type="protein sequence ID" value="EAL73493"/>
    <property type="gene ID" value="DDB_G0268080"/>
</dbReference>
<dbReference type="GeneID" id="8616345"/>
<dbReference type="KEGG" id="ddi:DDB_G0268080"/>
<dbReference type="dictyBase" id="DDB_G0268080">
    <property type="gene designation" value="rpc3"/>
</dbReference>
<dbReference type="VEuPathDB" id="AmoebaDB:DDB_G0268080"/>
<dbReference type="eggNOG" id="KOG2587">
    <property type="taxonomic scope" value="Eukaryota"/>
</dbReference>
<dbReference type="HOGENOM" id="CLU_023294_1_1_1"/>
<dbReference type="InParanoid" id="Q55FJ5"/>
<dbReference type="OMA" id="GQYVVHM"/>
<dbReference type="PhylomeDB" id="Q55FJ5"/>
<dbReference type="Reactome" id="R-DDI-76061">
    <property type="pathway name" value="RNA Polymerase III Transcription Initiation From Type 1 Promoter"/>
</dbReference>
<dbReference type="Reactome" id="R-DDI-76066">
    <property type="pathway name" value="RNA Polymerase III Transcription Initiation From Type 2 Promoter"/>
</dbReference>
<dbReference type="PRO" id="PR:Q55FJ5"/>
<dbReference type="Proteomes" id="UP000002195">
    <property type="component" value="Chromosome 1"/>
</dbReference>
<dbReference type="GO" id="GO:0005666">
    <property type="term" value="C:RNA polymerase III complex"/>
    <property type="evidence" value="ECO:0000250"/>
    <property type="project" value="dictyBase"/>
</dbReference>
<dbReference type="GO" id="GO:0003697">
    <property type="term" value="F:single-stranded DNA binding"/>
    <property type="evidence" value="ECO:0007669"/>
    <property type="project" value="InterPro"/>
</dbReference>
<dbReference type="FunFam" id="1.10.10.10:FF:000218">
    <property type="entry name" value="DNA-directed RNA polymerase III subunit RPC3"/>
    <property type="match status" value="1"/>
</dbReference>
<dbReference type="FunFam" id="1.10.10.10:FF:000515">
    <property type="entry name" value="DNA-directed RNA polymerase III subunit rpc3"/>
    <property type="match status" value="1"/>
</dbReference>
<dbReference type="FunFam" id="1.10.10.10:FF:000420">
    <property type="entry name" value="RNA polymerase III subunit, putative"/>
    <property type="match status" value="1"/>
</dbReference>
<dbReference type="Gene3D" id="1.10.10.10">
    <property type="entry name" value="Winged helix-like DNA-binding domain superfamily/Winged helix DNA-binding domain"/>
    <property type="match status" value="4"/>
</dbReference>
<dbReference type="InterPro" id="IPR055207">
    <property type="entry name" value="POLR3C_WHD"/>
</dbReference>
<dbReference type="InterPro" id="IPR013197">
    <property type="entry name" value="RNA_pol_III_RPC82-rel_HTH"/>
</dbReference>
<dbReference type="InterPro" id="IPR039748">
    <property type="entry name" value="RPC3"/>
</dbReference>
<dbReference type="InterPro" id="IPR036388">
    <property type="entry name" value="WH-like_DNA-bd_sf"/>
</dbReference>
<dbReference type="PANTHER" id="PTHR12949:SF0">
    <property type="entry name" value="DNA-DIRECTED RNA POLYMERASE III SUBUNIT RPC3"/>
    <property type="match status" value="1"/>
</dbReference>
<dbReference type="PANTHER" id="PTHR12949">
    <property type="entry name" value="RNA POLYMERASE III DNA DIRECTED -RELATED"/>
    <property type="match status" value="1"/>
</dbReference>
<dbReference type="Pfam" id="PF08221">
    <property type="entry name" value="HTH_9"/>
    <property type="match status" value="1"/>
</dbReference>
<dbReference type="Pfam" id="PF22536">
    <property type="entry name" value="POLR3C_WHD"/>
    <property type="match status" value="1"/>
</dbReference>
<comment type="function">
    <text evidence="1">DNA-dependent RNA polymerase catalyzes the transcription of DNA into RNA using the four ribonucleoside triphosphates as substrates. Specific core component of RNA polymerase III which synthesizes small RNAs, such as 5S rRNA and tRNAs (By similarity).</text>
</comment>
<comment type="subunit">
    <text evidence="1">Component of the RNA polymerase III (Pol III) complex consisting of 17 subunits.</text>
</comment>
<comment type="subcellular location">
    <subcellularLocation>
        <location evidence="3">Nucleus</location>
    </subcellularLocation>
</comment>
<comment type="similarity">
    <text evidence="3">Belongs to the eukaryotic RPC3/POLR3C RNA polymerase subunit family.</text>
</comment>
<organism>
    <name type="scientific">Dictyostelium discoideum</name>
    <name type="common">Social amoeba</name>
    <dbReference type="NCBI Taxonomy" id="44689"/>
    <lineage>
        <taxon>Eukaryota</taxon>
        <taxon>Amoebozoa</taxon>
        <taxon>Evosea</taxon>
        <taxon>Eumycetozoa</taxon>
        <taxon>Dictyostelia</taxon>
        <taxon>Dictyosteliales</taxon>
        <taxon>Dictyosteliaceae</taxon>
        <taxon>Dictyostelium</taxon>
    </lineage>
</organism>
<keyword id="KW-0240">DNA-directed RNA polymerase</keyword>
<keyword id="KW-0539">Nucleus</keyword>
<keyword id="KW-1185">Reference proteome</keyword>
<keyword id="KW-0804">Transcription</keyword>
<protein>
    <recommendedName>
        <fullName>DNA-directed RNA polymerase III subunit rpc3</fullName>
        <shortName>RNA polymerase III subunit C3</shortName>
    </recommendedName>
    <alternativeName>
        <fullName>DNA-directed RNA polymerase III subunit C</fullName>
    </alternativeName>
</protein>
<gene>
    <name type="primary">polr3c</name>
    <name type="synonym">rpc3</name>
    <name type="ORF">DDB_G0268080</name>
</gene>
<reference key="1">
    <citation type="journal article" date="2005" name="Nature">
        <title>The genome of the social amoeba Dictyostelium discoideum.</title>
        <authorList>
            <person name="Eichinger L."/>
            <person name="Pachebat J.A."/>
            <person name="Gloeckner G."/>
            <person name="Rajandream M.A."/>
            <person name="Sucgang R."/>
            <person name="Berriman M."/>
            <person name="Song J."/>
            <person name="Olsen R."/>
            <person name="Szafranski K."/>
            <person name="Xu Q."/>
            <person name="Tunggal B."/>
            <person name="Kummerfeld S."/>
            <person name="Madera M."/>
            <person name="Konfortov B.A."/>
            <person name="Rivero F."/>
            <person name="Bankier A.T."/>
            <person name="Lehmann R."/>
            <person name="Hamlin N."/>
            <person name="Davies R."/>
            <person name="Gaudet P."/>
            <person name="Fey P."/>
            <person name="Pilcher K."/>
            <person name="Chen G."/>
            <person name="Saunders D."/>
            <person name="Sodergren E.J."/>
            <person name="Davis P."/>
            <person name="Kerhornou A."/>
            <person name="Nie X."/>
            <person name="Hall N."/>
            <person name="Anjard C."/>
            <person name="Hemphill L."/>
            <person name="Bason N."/>
            <person name="Farbrother P."/>
            <person name="Desany B."/>
            <person name="Just E."/>
            <person name="Morio T."/>
            <person name="Rost R."/>
            <person name="Churcher C.M."/>
            <person name="Cooper J."/>
            <person name="Haydock S."/>
            <person name="van Driessche N."/>
            <person name="Cronin A."/>
            <person name="Goodhead I."/>
            <person name="Muzny D.M."/>
            <person name="Mourier T."/>
            <person name="Pain A."/>
            <person name="Lu M."/>
            <person name="Harper D."/>
            <person name="Lindsay R."/>
            <person name="Hauser H."/>
            <person name="James K.D."/>
            <person name="Quiles M."/>
            <person name="Madan Babu M."/>
            <person name="Saito T."/>
            <person name="Buchrieser C."/>
            <person name="Wardroper A."/>
            <person name="Felder M."/>
            <person name="Thangavelu M."/>
            <person name="Johnson D."/>
            <person name="Knights A."/>
            <person name="Loulseged H."/>
            <person name="Mungall K.L."/>
            <person name="Oliver K."/>
            <person name="Price C."/>
            <person name="Quail M.A."/>
            <person name="Urushihara H."/>
            <person name="Hernandez J."/>
            <person name="Rabbinowitsch E."/>
            <person name="Steffen D."/>
            <person name="Sanders M."/>
            <person name="Ma J."/>
            <person name="Kohara Y."/>
            <person name="Sharp S."/>
            <person name="Simmonds M.N."/>
            <person name="Spiegler S."/>
            <person name="Tivey A."/>
            <person name="Sugano S."/>
            <person name="White B."/>
            <person name="Walker D."/>
            <person name="Woodward J.R."/>
            <person name="Winckler T."/>
            <person name="Tanaka Y."/>
            <person name="Shaulsky G."/>
            <person name="Schleicher M."/>
            <person name="Weinstock G.M."/>
            <person name="Rosenthal A."/>
            <person name="Cox E.C."/>
            <person name="Chisholm R.L."/>
            <person name="Gibbs R.A."/>
            <person name="Loomis W.F."/>
            <person name="Platzer M."/>
            <person name="Kay R.R."/>
            <person name="Williams J.G."/>
            <person name="Dear P.H."/>
            <person name="Noegel A.A."/>
            <person name="Barrell B.G."/>
            <person name="Kuspa A."/>
        </authorList>
    </citation>
    <scope>NUCLEOTIDE SEQUENCE [LARGE SCALE GENOMIC DNA]</scope>
    <source>
        <strain>AX4</strain>
    </source>
</reference>
<sequence length="666" mass="75335">MYEQKVAIDIVKESFGDDVTKVFEFLVQRGKSSYKIINQSLSGKGGLTIKRIKQCLLVLIQHNLVTYEEFLLPLTKDEIEKLVPGEPLPSDSVYEAIIVNAIHRLRFPKFINYIKHSKGDEAAYILEELIDHGRLPMDLLIKQASQIQRVDTFEDQDDITKRFEDTFTKLIMDQFIMRAPRPRPVSDQETSNALSKEAKKVGGGGANGNNVGAHQKKDSDPFALPSVGFSSNGPLSSVDNSANDAESLEILTGKSSTTTIPSQPKKGTAKKTSAKPKSTAINTTATASLGRKRKSRDIYDEDDDEEPDLLVIEENVEINVNDHNSANKNSTTTTTTTTTKTGQHTLKKSKLDQSSSTTTTSSRQQQNGMDQQRIIDESRVLWTINYEQFIIEFKLKACYDFVTEKNNQQSGLLFNAMVKLCKRSIRSNQDSLTSCVYGENILEEYNRDLDSSKKMDKLQIEKYLSIMQASRPSMVTKMVSKSKQSSSSELGAYQVNVGNIIGIIKQKMVESIIKQKFGDNGLRVFKLLLIKNLLEPKQIAELAMIPPNECKALLFNMMQKNIIRLQEIPRSSDHFANRTFYLFFVDLPTIIATFTEDIFKAIYNTRERLKSELEPHKDALEKLTQLDEDQITEDQAKIYKKTDRITQTLLTVILNLDNDLLHLYSF</sequence>
<name>RPC3_DICDI</name>
<proteinExistence type="inferred from homology"/>
<accession>Q55FJ5</accession>
<evidence type="ECO:0000250" key="1"/>
<evidence type="ECO:0000256" key="2">
    <source>
        <dbReference type="SAM" id="MobiDB-lite"/>
    </source>
</evidence>
<evidence type="ECO:0000305" key="3"/>